<evidence type="ECO:0000255" key="1">
    <source>
        <dbReference type="HAMAP-Rule" id="MF_00226"/>
    </source>
</evidence>
<organism>
    <name type="scientific">Shigella flexneri</name>
    <dbReference type="NCBI Taxonomy" id="623"/>
    <lineage>
        <taxon>Bacteria</taxon>
        <taxon>Pseudomonadati</taxon>
        <taxon>Pseudomonadota</taxon>
        <taxon>Gammaproteobacteria</taxon>
        <taxon>Enterobacterales</taxon>
        <taxon>Enterobacteriaceae</taxon>
        <taxon>Shigella</taxon>
    </lineage>
</organism>
<comment type="similarity">
    <text evidence="1">Belongs to the CinA family.</text>
</comment>
<keyword id="KW-1185">Reference proteome</keyword>
<reference key="1">
    <citation type="journal article" date="2002" name="Nucleic Acids Res.">
        <title>Genome sequence of Shigella flexneri 2a: insights into pathogenicity through comparison with genomes of Escherichia coli K12 and O157.</title>
        <authorList>
            <person name="Jin Q."/>
            <person name="Yuan Z."/>
            <person name="Xu J."/>
            <person name="Wang Y."/>
            <person name="Shen Y."/>
            <person name="Lu W."/>
            <person name="Wang J."/>
            <person name="Liu H."/>
            <person name="Yang J."/>
            <person name="Yang F."/>
            <person name="Zhang X."/>
            <person name="Zhang J."/>
            <person name="Yang G."/>
            <person name="Wu H."/>
            <person name="Qu D."/>
            <person name="Dong J."/>
            <person name="Sun L."/>
            <person name="Xue Y."/>
            <person name="Zhao A."/>
            <person name="Gao Y."/>
            <person name="Zhu J."/>
            <person name="Kan B."/>
            <person name="Ding K."/>
            <person name="Chen S."/>
            <person name="Cheng H."/>
            <person name="Yao Z."/>
            <person name="He B."/>
            <person name="Chen R."/>
            <person name="Ma D."/>
            <person name="Qiang B."/>
            <person name="Wen Y."/>
            <person name="Hou Y."/>
            <person name="Yu J."/>
        </authorList>
    </citation>
    <scope>NUCLEOTIDE SEQUENCE [LARGE SCALE GENOMIC DNA]</scope>
    <source>
        <strain>301 / Serotype 2a</strain>
    </source>
</reference>
<reference key="2">
    <citation type="journal article" date="2003" name="Infect. Immun.">
        <title>Complete genome sequence and comparative genomics of Shigella flexneri serotype 2a strain 2457T.</title>
        <authorList>
            <person name="Wei J."/>
            <person name="Goldberg M.B."/>
            <person name="Burland V."/>
            <person name="Venkatesan M.M."/>
            <person name="Deng W."/>
            <person name="Fournier G."/>
            <person name="Mayhew G.F."/>
            <person name="Plunkett G. III"/>
            <person name="Rose D.J."/>
            <person name="Darling A."/>
            <person name="Mau B."/>
            <person name="Perna N.T."/>
            <person name="Payne S.M."/>
            <person name="Runyen-Janecky L.J."/>
            <person name="Zhou S."/>
            <person name="Schwartz D.C."/>
            <person name="Blattner F.R."/>
        </authorList>
    </citation>
    <scope>NUCLEOTIDE SEQUENCE [LARGE SCALE GENOMIC DNA]</scope>
    <source>
        <strain>ATCC 700930 / 2457T / Serotype 2a</strain>
    </source>
</reference>
<feature type="chain" id="PRO_1000058727" description="CinA-like protein">
    <location>
        <begin position="1"/>
        <end position="400"/>
    </location>
</feature>
<dbReference type="EMBL" id="AE005674">
    <property type="protein sequence ID" value="AAN43842.1"/>
    <property type="molecule type" value="Genomic_DNA"/>
</dbReference>
<dbReference type="EMBL" id="AE014073">
    <property type="protein sequence ID" value="AAP17661.1"/>
    <property type="molecule type" value="Genomic_DNA"/>
</dbReference>
<dbReference type="RefSeq" id="NP_708135.1">
    <property type="nucleotide sequence ID" value="NC_004337.2"/>
</dbReference>
<dbReference type="RefSeq" id="WP_000921661.1">
    <property type="nucleotide sequence ID" value="NZ_WPGW01000032.1"/>
</dbReference>
<dbReference type="SMR" id="Q83KC1"/>
<dbReference type="STRING" id="198214.SF2328"/>
<dbReference type="PaxDb" id="198214-SF2328"/>
<dbReference type="GeneID" id="1023488"/>
<dbReference type="KEGG" id="sfl:SF2328"/>
<dbReference type="KEGG" id="sfx:S2461"/>
<dbReference type="PATRIC" id="fig|198214.7.peg.2789"/>
<dbReference type="HOGENOM" id="CLU_030805_9_1_6"/>
<dbReference type="Proteomes" id="UP000001006">
    <property type="component" value="Chromosome"/>
</dbReference>
<dbReference type="Proteomes" id="UP000002673">
    <property type="component" value="Chromosome"/>
</dbReference>
<dbReference type="CDD" id="cd00885">
    <property type="entry name" value="cinA"/>
    <property type="match status" value="1"/>
</dbReference>
<dbReference type="Gene3D" id="3.40.980.10">
    <property type="entry name" value="MoaB/Mog-like domain"/>
    <property type="match status" value="1"/>
</dbReference>
<dbReference type="HAMAP" id="MF_00226_B">
    <property type="entry name" value="CinA_B"/>
    <property type="match status" value="1"/>
</dbReference>
<dbReference type="InterPro" id="IPR050101">
    <property type="entry name" value="CinA"/>
</dbReference>
<dbReference type="InterPro" id="IPR036653">
    <property type="entry name" value="CinA-like_C"/>
</dbReference>
<dbReference type="InterPro" id="IPR008135">
    <property type="entry name" value="Competence-induced_CinA"/>
</dbReference>
<dbReference type="InterPro" id="IPR036425">
    <property type="entry name" value="MoaB/Mog-like_dom_sf"/>
</dbReference>
<dbReference type="InterPro" id="IPR001453">
    <property type="entry name" value="MoaB/Mog_dom"/>
</dbReference>
<dbReference type="NCBIfam" id="TIGR00200">
    <property type="entry name" value="cinA_nterm"/>
    <property type="match status" value="1"/>
</dbReference>
<dbReference type="NCBIfam" id="TIGR00177">
    <property type="entry name" value="molyb_syn"/>
    <property type="match status" value="1"/>
</dbReference>
<dbReference type="NCBIfam" id="NF002978">
    <property type="entry name" value="PRK03673.1"/>
    <property type="match status" value="1"/>
</dbReference>
<dbReference type="PANTHER" id="PTHR13939">
    <property type="entry name" value="NICOTINAMIDE-NUCLEOTIDE AMIDOHYDROLASE PNCC"/>
    <property type="match status" value="1"/>
</dbReference>
<dbReference type="PANTHER" id="PTHR13939:SF0">
    <property type="entry name" value="NMN AMIDOHYDROLASE-LIKE PROTEIN YFAY"/>
    <property type="match status" value="1"/>
</dbReference>
<dbReference type="Pfam" id="PF00994">
    <property type="entry name" value="MoCF_biosynth"/>
    <property type="match status" value="1"/>
</dbReference>
<dbReference type="PIRSF" id="PIRSF006728">
    <property type="entry name" value="CinA"/>
    <property type="match status" value="1"/>
</dbReference>
<dbReference type="SMART" id="SM00852">
    <property type="entry name" value="MoCF_biosynth"/>
    <property type="match status" value="1"/>
</dbReference>
<dbReference type="SUPFAM" id="SSF142433">
    <property type="entry name" value="CinA-like"/>
    <property type="match status" value="1"/>
</dbReference>
<dbReference type="SUPFAM" id="SSF53218">
    <property type="entry name" value="Molybdenum cofactor biosynthesis proteins"/>
    <property type="match status" value="1"/>
</dbReference>
<gene>
    <name type="ordered locus">SF2328</name>
    <name type="ordered locus">S2461</name>
</gene>
<sequence>MLKVEMLSTGDEVLYGQIVDTNAAWLADFFFHQGLPLSRRNTVGDNLDDLVTILRERSQHADVLIVNGGLGPTSDDLSALAAATAKGEGLVLHEAWLKEMERYFHERGRVMAPSNRKQAELPASAEFINNPVGTACGFAVQLNRCLMFFTPGVPSEFKVMVEHEILPRLRERFSLPQPPVCLRLTTFGRSESDLAQSLDTLQLPPGVTMGYRSSMPIIELKLTGPASEQQAMEKLWLDVKRVAGQSVIFEGTEGLPAQISRELQNRQFSLTLSEQFTGGLLALQLSRAGAPLLACEVIPSQEETLAQTAHWITERRANHFAGLALAVSGFENEHLNFALATPDGTFALRVRFSTTRYSLAIRQEVCAMMALNMLRRWLNGQDIASEHGWIEVVESMTLSV</sequence>
<accession>Q83KC1</accession>
<accession>Q7C0R5</accession>
<name>CINAL_SHIFL</name>
<protein>
    <recommendedName>
        <fullName evidence="1">CinA-like protein</fullName>
    </recommendedName>
</protein>
<proteinExistence type="inferred from homology"/>